<organism>
    <name type="scientific">Herbaspirillum seropedicae (strain SmR1)</name>
    <dbReference type="NCBI Taxonomy" id="757424"/>
    <lineage>
        <taxon>Bacteria</taxon>
        <taxon>Pseudomonadati</taxon>
        <taxon>Pseudomonadota</taxon>
        <taxon>Betaproteobacteria</taxon>
        <taxon>Burkholderiales</taxon>
        <taxon>Oxalobacteraceae</taxon>
        <taxon>Herbaspirillum</taxon>
    </lineage>
</organism>
<gene>
    <name type="primary">katG</name>
    <name type="ordered locus">Hsero_1242</name>
</gene>
<name>KATG_HERSS</name>
<evidence type="ECO:0000250" key="1"/>
<evidence type="ECO:0000256" key="2">
    <source>
        <dbReference type="SAM" id="MobiDB-lite"/>
    </source>
</evidence>
<evidence type="ECO:0000305" key="3"/>
<feature type="chain" id="PRO_0000400097" description="Catalase-peroxidase">
    <location>
        <begin position="1"/>
        <end position="748"/>
    </location>
</feature>
<feature type="region of interest" description="Disordered" evidence="2">
    <location>
        <begin position="194"/>
        <end position="223"/>
    </location>
</feature>
<feature type="region of interest" description="Disordered" evidence="2">
    <location>
        <begin position="288"/>
        <end position="310"/>
    </location>
</feature>
<feature type="compositionally biased region" description="Basic and acidic residues" evidence="2">
    <location>
        <begin position="290"/>
        <end position="301"/>
    </location>
</feature>
<feature type="active site" description="Proton acceptor" evidence="1">
    <location>
        <position position="92"/>
    </location>
</feature>
<feature type="binding site" description="axial binding residue" evidence="1">
    <location>
        <position position="283"/>
    </location>
    <ligand>
        <name>heme b</name>
        <dbReference type="ChEBI" id="CHEBI:60344"/>
    </ligand>
    <ligandPart>
        <name>Fe</name>
        <dbReference type="ChEBI" id="CHEBI:18248"/>
    </ligandPart>
</feature>
<feature type="site" description="Transition state stabilizer" evidence="1">
    <location>
        <position position="88"/>
    </location>
</feature>
<feature type="cross-link" description="Tryptophyl-tyrosyl-methioninium (Trp-Tyr) (with M-268)" evidence="1">
    <location>
        <begin position="91"/>
        <end position="242"/>
    </location>
</feature>
<feature type="cross-link" description="Tryptophyl-tyrosyl-methioninium (Tyr-Met) (with W-91)" evidence="1">
    <location>
        <begin position="242"/>
        <end position="268"/>
    </location>
</feature>
<protein>
    <recommendedName>
        <fullName>Catalase-peroxidase</fullName>
        <shortName>CP</shortName>
        <ecNumber>1.11.1.21</ecNumber>
    </recommendedName>
    <alternativeName>
        <fullName>Peroxidase/catalase</fullName>
    </alternativeName>
</protein>
<sequence>MSNEAKCPFNHTAGSGTSNRDWWPKQLRVDLLAQHSSKSNPMGEDFDYAEAFKSLDLAAVKADLAKVMTDSQDWWPADFGHYGPLFVRMAWHSAGTYRIGDGRGGAGRGQQRFAPLNSWPDNVNLDKARRLLWPVKQKYGNKISWADLLILTGNVALETMGFKTFGFAGGRADVWEPDLDVYWGTESTWLGGDDRYGKGKGSSSQGEIPADAHRHGQEQARTAPAGRNLENPLAAVQMGLIYVNPEGPEGNPDPLAAAHDIRETFARMAMDDEETVALIAGGHTFGKTHGAGDAKHVGREPEGEDMDSQGLGWKSSFGSGVGGDTISSGLEVTWTQTPAQWSNYFFENLFKYEWELTKSPAGAHQWVAKGADAVIPHAHGGAPLLPTMLTTDLSLRFDPAYEKISRRFLEHPEQFADAFARAWFKLTHRDLGPRSRYLGPEVPAEELIWQDPLPQAEGAQIDAADVAALKAKVLGSGLSVPELVATAWASASTFRGGDMRGGANGARIRLAPQKDWAANQPAQLAKVLKTLEGIQSAFNQGGKKVSLADLIVLAGSAAVEKAAQDAGVAVAVPFRAGRVDASQEQTDAASFAPLEPIVDGFRNFQKQRYAVRGEDMLIDKAQQLTLSAPEMTVLVGGLRVLGNNVGGSTKGMFTDRVGVLSNDFFVNLLDMATEWKSTSPAQEEFEGRDRKTGAVKWAGTRVDLVFGSNAVLRALAEVYASADAKEKFVKDFVAAWVKVMELDRFDLK</sequence>
<proteinExistence type="evidence at protein level"/>
<accession>D8INT8</accession>
<comment type="function">
    <text evidence="1">Bifunctional enzyme with both catalase and broad-spectrum peroxidase activity.</text>
</comment>
<comment type="catalytic activity">
    <reaction>
        <text>H2O2 + AH2 = A + 2 H2O</text>
        <dbReference type="Rhea" id="RHEA:30275"/>
        <dbReference type="ChEBI" id="CHEBI:13193"/>
        <dbReference type="ChEBI" id="CHEBI:15377"/>
        <dbReference type="ChEBI" id="CHEBI:16240"/>
        <dbReference type="ChEBI" id="CHEBI:17499"/>
        <dbReference type="EC" id="1.11.1.21"/>
    </reaction>
</comment>
<comment type="catalytic activity">
    <reaction>
        <text>2 H2O2 = O2 + 2 H2O</text>
        <dbReference type="Rhea" id="RHEA:20309"/>
        <dbReference type="ChEBI" id="CHEBI:15377"/>
        <dbReference type="ChEBI" id="CHEBI:15379"/>
        <dbReference type="ChEBI" id="CHEBI:16240"/>
        <dbReference type="EC" id="1.11.1.21"/>
    </reaction>
</comment>
<comment type="cofactor">
    <cofactor evidence="1">
        <name>heme b</name>
        <dbReference type="ChEBI" id="CHEBI:60344"/>
    </cofactor>
    <text evidence="1">Binds 1 heme b (iron(II)-protoporphyrin IX) group per dimer.</text>
</comment>
<comment type="subunit">
    <text evidence="1">Homodimer or homotetramer.</text>
</comment>
<comment type="PTM">
    <text evidence="1">Formation of the three residue Trp-Tyr-Met cross-link is important for the catalase, but not the peroxidase activity of the enzyme.</text>
</comment>
<comment type="similarity">
    <text evidence="3">Belongs to the peroxidase family. Peroxidase/catalase subfamily.</text>
</comment>
<reference key="1">
    <citation type="submission" date="2010-04" db="EMBL/GenBank/DDBJ databases">
        <title>The genome of Herbaspirillum seropedicae SmR1, an endophytic, nitrogen-fixing, plant-growth promoting beta-Proteobacteria.</title>
        <authorList>
            <person name="Pedrosa F.O."/>
            <person name="Monteiro R.A."/>
            <person name="Wassem R."/>
            <person name="Cruz L.M."/>
            <person name="Ayub R.A."/>
            <person name="Colauto N.B."/>
            <person name="Fernandez M.A."/>
            <person name="Fungaro M.H.P."/>
            <person name="Grisard E.C."/>
            <person name="Hungria M."/>
            <person name="Madeira H.M.F."/>
            <person name="Nodari R.O."/>
            <person name="Osaku C.A."/>
            <person name="Petzl-Erler M.L."/>
            <person name="Terenzi H."/>
            <person name="Vieira L.G.E."/>
            <person name="Almeida M.I.M."/>
            <person name="Alves L.R."/>
            <person name="Arantes O.M.N."/>
            <person name="Balsanelli E."/>
            <person name="Barcellos F.G."/>
            <person name="Baura V.A."/>
            <person name="Binde D.R."/>
            <person name="Campo R.J."/>
            <person name="Chubatsu L.S."/>
            <person name="Chueire L.M.O."/>
            <person name="Ciferri R.R."/>
            <person name="Correa L.C."/>
            <person name="da Conceicao Silva J.L."/>
            <person name="Dabul A.N.G."/>
            <person name="Dambros B.P."/>
            <person name="Faoro H."/>
            <person name="Favetti A."/>
            <person name="Friedermann G."/>
            <person name="Furlaneto M.C."/>
            <person name="Gasques L.S."/>
            <person name="Gimenes C.C.T."/>
            <person name="Gioppo N.M.R."/>
            <person name="Glienke-Blanco C."/>
            <person name="Godoy L.P."/>
            <person name="Guerra M.P."/>
            <person name="Karp S."/>
            <person name="Kava-Cordeiro V."/>
            <person name="Margarido V.P."/>
            <person name="Mathioni S.M."/>
            <person name="Menck-Soares M.A."/>
            <person name="Murace N.K."/>
            <person name="Nicolas M.F."/>
            <person name="Oliveira C.E.C."/>
            <person name="Pagnan N.A.B."/>
            <person name="Pamphile J.A."/>
            <person name="Patussi E.V."/>
            <person name="Pereira L.F.P."/>
            <person name="Pereira-Ferrari L."/>
            <person name="Pinto F.G.S."/>
            <person name="Precoma C."/>
            <person name="Prioli A.J."/>
            <person name="Prioli S.M.A.P."/>
            <person name="Raittz R.T."/>
            <person name="Ramos H.J.O."/>
            <person name="Ribeiro E.M.S.F."/>
            <person name="Rigo L.U."/>
            <person name="Rocha C.L.M.S.C."/>
            <person name="Rocha S.N."/>
            <person name="Santos K."/>
            <person name="Satori D."/>
            <person name="Silva A.G."/>
            <person name="Simao R.C.G."/>
            <person name="Soares M.A.M."/>
            <person name="Souza E.M."/>
            <person name="Steffens M.B.R."/>
            <person name="Steindel M."/>
            <person name="Tadra-Sfeir M.Z."/>
            <person name="Takahashi E.K."/>
            <person name="Torres R.A."/>
            <person name="Valle J.S."/>
            <person name="Vernal J.I."/>
            <person name="Vilas-Boas L.A."/>
            <person name="Watanabe M.A.E."/>
            <person name="Weiss V.A."/>
            <person name="Yates M.A."/>
            <person name="Souza E.M."/>
        </authorList>
    </citation>
    <scope>NUCLEOTIDE SEQUENCE [LARGE SCALE GENOMIC DNA]</scope>
    <source>
        <strain>SmR1</strain>
    </source>
</reference>
<reference key="2">
    <citation type="journal article" date="2007" name="Proteomics">
        <title>A two-dimensional proteome reference map of Herbaspirillum seropedicae proteins.</title>
        <authorList>
            <person name="Chaves D.F.S."/>
            <person name="Ferrer P.P."/>
            <person name="de Souza E.M."/>
            <person name="Gruz L.M."/>
            <person name="Monteiro R.A."/>
            <person name="de Oliveira Pedrosa F."/>
        </authorList>
    </citation>
    <scope>IDENTIFICATION BY MASS SPECTROMETRY</scope>
</reference>
<keyword id="KW-0349">Heme</keyword>
<keyword id="KW-0376">Hydrogen peroxide</keyword>
<keyword id="KW-0408">Iron</keyword>
<keyword id="KW-0479">Metal-binding</keyword>
<keyword id="KW-0560">Oxidoreductase</keyword>
<keyword id="KW-0575">Peroxidase</keyword>
<keyword id="KW-1185">Reference proteome</keyword>
<dbReference type="EC" id="1.11.1.21"/>
<dbReference type="EMBL" id="CP002039">
    <property type="protein sequence ID" value="ADJ62758.1"/>
    <property type="molecule type" value="Genomic_DNA"/>
</dbReference>
<dbReference type="RefSeq" id="WP_013233264.1">
    <property type="nucleotide sequence ID" value="NC_014323.1"/>
</dbReference>
<dbReference type="SMR" id="D8INT8"/>
<dbReference type="STRING" id="757424.Hsero_1242"/>
<dbReference type="GeneID" id="29389902"/>
<dbReference type="KEGG" id="hse:Hsero_1242"/>
<dbReference type="eggNOG" id="COG0376">
    <property type="taxonomic scope" value="Bacteria"/>
</dbReference>
<dbReference type="HOGENOM" id="CLU_025424_2_0_4"/>
<dbReference type="OrthoDB" id="9759743at2"/>
<dbReference type="Proteomes" id="UP000000329">
    <property type="component" value="Chromosome"/>
</dbReference>
<dbReference type="GO" id="GO:0005829">
    <property type="term" value="C:cytosol"/>
    <property type="evidence" value="ECO:0007669"/>
    <property type="project" value="TreeGrafter"/>
</dbReference>
<dbReference type="GO" id="GO:0004096">
    <property type="term" value="F:catalase activity"/>
    <property type="evidence" value="ECO:0007669"/>
    <property type="project" value="UniProtKB-UniRule"/>
</dbReference>
<dbReference type="GO" id="GO:0020037">
    <property type="term" value="F:heme binding"/>
    <property type="evidence" value="ECO:0007669"/>
    <property type="project" value="InterPro"/>
</dbReference>
<dbReference type="GO" id="GO:0046872">
    <property type="term" value="F:metal ion binding"/>
    <property type="evidence" value="ECO:0007669"/>
    <property type="project" value="UniProtKB-KW"/>
</dbReference>
<dbReference type="GO" id="GO:0070301">
    <property type="term" value="P:cellular response to hydrogen peroxide"/>
    <property type="evidence" value="ECO:0007669"/>
    <property type="project" value="TreeGrafter"/>
</dbReference>
<dbReference type="GO" id="GO:0042744">
    <property type="term" value="P:hydrogen peroxide catabolic process"/>
    <property type="evidence" value="ECO:0007669"/>
    <property type="project" value="UniProtKB-KW"/>
</dbReference>
<dbReference type="CDD" id="cd00649">
    <property type="entry name" value="catalase_peroxidase_1"/>
    <property type="match status" value="1"/>
</dbReference>
<dbReference type="CDD" id="cd08200">
    <property type="entry name" value="catalase_peroxidase_2"/>
    <property type="match status" value="1"/>
</dbReference>
<dbReference type="FunFam" id="1.10.420.10:FF:000002">
    <property type="entry name" value="Catalase-peroxidase"/>
    <property type="match status" value="1"/>
</dbReference>
<dbReference type="FunFam" id="1.10.420.10:FF:000004">
    <property type="entry name" value="Catalase-peroxidase"/>
    <property type="match status" value="1"/>
</dbReference>
<dbReference type="FunFam" id="1.10.520.10:FF:000002">
    <property type="entry name" value="Catalase-peroxidase"/>
    <property type="match status" value="1"/>
</dbReference>
<dbReference type="Gene3D" id="1.10.520.10">
    <property type="match status" value="2"/>
</dbReference>
<dbReference type="Gene3D" id="1.10.420.10">
    <property type="entry name" value="Peroxidase, domain 2"/>
    <property type="match status" value="2"/>
</dbReference>
<dbReference type="HAMAP" id="MF_01961">
    <property type="entry name" value="Catal_peroxid"/>
    <property type="match status" value="1"/>
</dbReference>
<dbReference type="InterPro" id="IPR000763">
    <property type="entry name" value="Catalase_peroxidase"/>
</dbReference>
<dbReference type="InterPro" id="IPR002016">
    <property type="entry name" value="Haem_peroxidase"/>
</dbReference>
<dbReference type="InterPro" id="IPR010255">
    <property type="entry name" value="Haem_peroxidase_sf"/>
</dbReference>
<dbReference type="InterPro" id="IPR019794">
    <property type="entry name" value="Peroxidases_AS"/>
</dbReference>
<dbReference type="InterPro" id="IPR019793">
    <property type="entry name" value="Peroxidases_heam-ligand_BS"/>
</dbReference>
<dbReference type="NCBIfam" id="TIGR00198">
    <property type="entry name" value="cat_per_HPI"/>
    <property type="match status" value="1"/>
</dbReference>
<dbReference type="NCBIfam" id="NF011635">
    <property type="entry name" value="PRK15061.1"/>
    <property type="match status" value="1"/>
</dbReference>
<dbReference type="PANTHER" id="PTHR30555:SF0">
    <property type="entry name" value="CATALASE-PEROXIDASE"/>
    <property type="match status" value="1"/>
</dbReference>
<dbReference type="PANTHER" id="PTHR30555">
    <property type="entry name" value="HYDROPEROXIDASE I, BIFUNCTIONAL CATALASE-PEROXIDASE"/>
    <property type="match status" value="1"/>
</dbReference>
<dbReference type="Pfam" id="PF00141">
    <property type="entry name" value="peroxidase"/>
    <property type="match status" value="2"/>
</dbReference>
<dbReference type="PRINTS" id="PR00460">
    <property type="entry name" value="BPEROXIDASE"/>
</dbReference>
<dbReference type="PRINTS" id="PR00458">
    <property type="entry name" value="PEROXIDASE"/>
</dbReference>
<dbReference type="SUPFAM" id="SSF48113">
    <property type="entry name" value="Heme-dependent peroxidases"/>
    <property type="match status" value="2"/>
</dbReference>
<dbReference type="PROSITE" id="PS00435">
    <property type="entry name" value="PEROXIDASE_1"/>
    <property type="match status" value="1"/>
</dbReference>
<dbReference type="PROSITE" id="PS00436">
    <property type="entry name" value="PEROXIDASE_2"/>
    <property type="match status" value="1"/>
</dbReference>
<dbReference type="PROSITE" id="PS50873">
    <property type="entry name" value="PEROXIDASE_4"/>
    <property type="match status" value="2"/>
</dbReference>